<proteinExistence type="evidence at protein level"/>
<comment type="function">
    <text evidence="1">Catalyzes the irreversible cleavage of the glycosidic bond in both 5'-methylthioadenosine (MTA) and S-adenosylhomocysteine (SAH/AdoHcy) to adenine and the corresponding thioribose, 5'-methylthioribose and S-ribosylhomocysteine, respectively. Also cleaves 5'-deoxyadenosine, a toxic by-product of radical S-adenosylmethionine (SAM) enzymes, into 5-deoxyribose and adenine. Thus, is required for in vivo function of the radical SAM enzymes biotin synthase and lipoic acid synthase, that are inhibited by 5'-deoxyadenosine accumulation.</text>
</comment>
<comment type="catalytic activity">
    <reaction evidence="1">
        <text>S-adenosyl-L-homocysteine + H2O = S-(5-deoxy-D-ribos-5-yl)-L-homocysteine + adenine</text>
        <dbReference type="Rhea" id="RHEA:17805"/>
        <dbReference type="ChEBI" id="CHEBI:15377"/>
        <dbReference type="ChEBI" id="CHEBI:16708"/>
        <dbReference type="ChEBI" id="CHEBI:57856"/>
        <dbReference type="ChEBI" id="CHEBI:58195"/>
        <dbReference type="EC" id="3.2.2.9"/>
    </reaction>
</comment>
<comment type="catalytic activity">
    <reaction evidence="1">
        <text>S-methyl-5'-thioadenosine + H2O = 5-(methylsulfanyl)-D-ribose + adenine</text>
        <dbReference type="Rhea" id="RHEA:13617"/>
        <dbReference type="ChEBI" id="CHEBI:15377"/>
        <dbReference type="ChEBI" id="CHEBI:16708"/>
        <dbReference type="ChEBI" id="CHEBI:17509"/>
        <dbReference type="ChEBI" id="CHEBI:78440"/>
        <dbReference type="EC" id="3.2.2.9"/>
    </reaction>
</comment>
<comment type="catalytic activity">
    <reaction evidence="1">
        <text>5'-deoxyadenosine + H2O = 5-deoxy-D-ribose + adenine</text>
        <dbReference type="Rhea" id="RHEA:29859"/>
        <dbReference type="ChEBI" id="CHEBI:15377"/>
        <dbReference type="ChEBI" id="CHEBI:16708"/>
        <dbReference type="ChEBI" id="CHEBI:17319"/>
        <dbReference type="ChEBI" id="CHEBI:149540"/>
        <dbReference type="EC" id="3.2.2.9"/>
    </reaction>
    <physiologicalReaction direction="left-to-right" evidence="1">
        <dbReference type="Rhea" id="RHEA:29860"/>
    </physiologicalReaction>
</comment>
<comment type="pathway">
    <text evidence="1">Amino-acid biosynthesis; L-methionine biosynthesis via salvage pathway; S-methyl-5-thio-alpha-D-ribose 1-phosphate from S-methyl-5'-thioadenosine (hydrolase route): step 1/2.</text>
</comment>
<comment type="subunit">
    <text evidence="1">Homodimer.</text>
</comment>
<comment type="similarity">
    <text evidence="1">Belongs to the PNP/UDP phosphorylase family. MtnN subfamily.</text>
</comment>
<gene>
    <name evidence="1" type="primary">mtnN</name>
    <name type="ordered locus">Z0170</name>
    <name type="ordered locus">ECs0163</name>
</gene>
<name>MTNN_ECO57</name>
<dbReference type="EC" id="3.2.2.9" evidence="1"/>
<dbReference type="EMBL" id="AE005174">
    <property type="protein sequence ID" value="AAG54463.1"/>
    <property type="molecule type" value="Genomic_DNA"/>
</dbReference>
<dbReference type="EMBL" id="BA000007">
    <property type="protein sequence ID" value="BAB33586.1"/>
    <property type="molecule type" value="Genomic_DNA"/>
</dbReference>
<dbReference type="PIR" id="C85500">
    <property type="entry name" value="C85500"/>
</dbReference>
<dbReference type="PIR" id="C90649">
    <property type="entry name" value="C90649"/>
</dbReference>
<dbReference type="RefSeq" id="WP_000689844.1">
    <property type="nucleotide sequence ID" value="NZ_VOAI01000002.1"/>
</dbReference>
<dbReference type="PDB" id="3DF9">
    <property type="method" value="X-ray"/>
    <property type="resolution" value="1.95 A"/>
    <property type="chains" value="A/B=1-232"/>
</dbReference>
<dbReference type="PDBsum" id="3DF9"/>
<dbReference type="SMR" id="P0AF14"/>
<dbReference type="STRING" id="155864.Z0170"/>
<dbReference type="ChEMBL" id="CHEMBL1250346"/>
<dbReference type="DrugBank" id="DB07649">
    <property type="generic name" value="(3R,4S)-1-[(4-amino-5H-pyrrolo[3,2-d]pyrimidin-7-yl)methyl]-4-[(benzylsulfanyl)methyl]pyrrolidin-3-ol"/>
</dbReference>
<dbReference type="GeneID" id="93777267"/>
<dbReference type="KEGG" id="ece:Z0170"/>
<dbReference type="KEGG" id="ecs:ECs_0163"/>
<dbReference type="PATRIC" id="fig|386585.9.peg.263"/>
<dbReference type="eggNOG" id="COG0775">
    <property type="taxonomic scope" value="Bacteria"/>
</dbReference>
<dbReference type="HOGENOM" id="CLU_031248_2_2_6"/>
<dbReference type="OMA" id="DQFVHSK"/>
<dbReference type="BRENDA" id="3.2.2.16">
    <property type="organism ID" value="2026"/>
</dbReference>
<dbReference type="BRENDA" id="3.2.2.9">
    <property type="organism ID" value="2026"/>
</dbReference>
<dbReference type="UniPathway" id="UPA00904">
    <property type="reaction ID" value="UER00871"/>
</dbReference>
<dbReference type="EvolutionaryTrace" id="P0AF14"/>
<dbReference type="Proteomes" id="UP000000558">
    <property type="component" value="Chromosome"/>
</dbReference>
<dbReference type="Proteomes" id="UP000002519">
    <property type="component" value="Chromosome"/>
</dbReference>
<dbReference type="GO" id="GO:0005829">
    <property type="term" value="C:cytosol"/>
    <property type="evidence" value="ECO:0007669"/>
    <property type="project" value="TreeGrafter"/>
</dbReference>
<dbReference type="GO" id="GO:0008782">
    <property type="term" value="F:adenosylhomocysteine nucleosidase activity"/>
    <property type="evidence" value="ECO:0007669"/>
    <property type="project" value="UniProtKB-UniRule"/>
</dbReference>
<dbReference type="GO" id="GO:0008930">
    <property type="term" value="F:methylthioadenosine nucleosidase activity"/>
    <property type="evidence" value="ECO:0007669"/>
    <property type="project" value="UniProtKB-UniRule"/>
</dbReference>
<dbReference type="GO" id="GO:0019509">
    <property type="term" value="P:L-methionine salvage from methylthioadenosine"/>
    <property type="evidence" value="ECO:0007669"/>
    <property type="project" value="UniProtKB-UniRule"/>
</dbReference>
<dbReference type="GO" id="GO:0019284">
    <property type="term" value="P:L-methionine salvage from S-adenosylmethionine"/>
    <property type="evidence" value="ECO:0007669"/>
    <property type="project" value="TreeGrafter"/>
</dbReference>
<dbReference type="GO" id="GO:0046124">
    <property type="term" value="P:purine deoxyribonucleoside catabolic process"/>
    <property type="evidence" value="ECO:0007669"/>
    <property type="project" value="UniProtKB-UniRule"/>
</dbReference>
<dbReference type="CDD" id="cd09008">
    <property type="entry name" value="MTAN"/>
    <property type="match status" value="1"/>
</dbReference>
<dbReference type="FunFam" id="3.40.50.1580:FF:000001">
    <property type="entry name" value="MTA/SAH nucleosidase family protein"/>
    <property type="match status" value="1"/>
</dbReference>
<dbReference type="Gene3D" id="3.40.50.1580">
    <property type="entry name" value="Nucleoside phosphorylase domain"/>
    <property type="match status" value="1"/>
</dbReference>
<dbReference type="HAMAP" id="MF_01684">
    <property type="entry name" value="Salvage_MtnN"/>
    <property type="match status" value="1"/>
</dbReference>
<dbReference type="InterPro" id="IPR010049">
    <property type="entry name" value="MTA_SAH_Nsdase"/>
</dbReference>
<dbReference type="InterPro" id="IPR000845">
    <property type="entry name" value="Nucleoside_phosphorylase_d"/>
</dbReference>
<dbReference type="InterPro" id="IPR035994">
    <property type="entry name" value="Nucleoside_phosphorylase_sf"/>
</dbReference>
<dbReference type="NCBIfam" id="TIGR01704">
    <property type="entry name" value="MTA_SAH-Nsdase"/>
    <property type="match status" value="1"/>
</dbReference>
<dbReference type="NCBIfam" id="NF004079">
    <property type="entry name" value="PRK05584.1"/>
    <property type="match status" value="1"/>
</dbReference>
<dbReference type="PANTHER" id="PTHR46832">
    <property type="entry name" value="5'-METHYLTHIOADENOSINE/S-ADENOSYLHOMOCYSTEINE NUCLEOSIDASE"/>
    <property type="match status" value="1"/>
</dbReference>
<dbReference type="PANTHER" id="PTHR46832:SF1">
    <property type="entry name" value="5'-METHYLTHIOADENOSINE_S-ADENOSYLHOMOCYSTEINE NUCLEOSIDASE"/>
    <property type="match status" value="1"/>
</dbReference>
<dbReference type="Pfam" id="PF01048">
    <property type="entry name" value="PNP_UDP_1"/>
    <property type="match status" value="1"/>
</dbReference>
<dbReference type="SUPFAM" id="SSF53167">
    <property type="entry name" value="Purine and uridine phosphorylases"/>
    <property type="match status" value="1"/>
</dbReference>
<evidence type="ECO:0000255" key="1">
    <source>
        <dbReference type="HAMAP-Rule" id="MF_01684"/>
    </source>
</evidence>
<evidence type="ECO:0007829" key="2">
    <source>
        <dbReference type="PDB" id="3DF9"/>
    </source>
</evidence>
<keyword id="KW-0002">3D-structure</keyword>
<keyword id="KW-0028">Amino-acid biosynthesis</keyword>
<keyword id="KW-0378">Hydrolase</keyword>
<keyword id="KW-0486">Methionine biosynthesis</keyword>
<keyword id="KW-1185">Reference proteome</keyword>
<accession>P0AF14</accession>
<accession>P24247</accession>
<reference key="1">
    <citation type="journal article" date="2001" name="Nature">
        <title>Genome sequence of enterohaemorrhagic Escherichia coli O157:H7.</title>
        <authorList>
            <person name="Perna N.T."/>
            <person name="Plunkett G. III"/>
            <person name="Burland V."/>
            <person name="Mau B."/>
            <person name="Glasner J.D."/>
            <person name="Rose D.J."/>
            <person name="Mayhew G.F."/>
            <person name="Evans P.S."/>
            <person name="Gregor J."/>
            <person name="Kirkpatrick H.A."/>
            <person name="Posfai G."/>
            <person name="Hackett J."/>
            <person name="Klink S."/>
            <person name="Boutin A."/>
            <person name="Shao Y."/>
            <person name="Miller L."/>
            <person name="Grotbeck E.J."/>
            <person name="Davis N.W."/>
            <person name="Lim A."/>
            <person name="Dimalanta E.T."/>
            <person name="Potamousis K."/>
            <person name="Apodaca J."/>
            <person name="Anantharaman T.S."/>
            <person name="Lin J."/>
            <person name="Yen G."/>
            <person name="Schwartz D.C."/>
            <person name="Welch R.A."/>
            <person name="Blattner F.R."/>
        </authorList>
    </citation>
    <scope>NUCLEOTIDE SEQUENCE [LARGE SCALE GENOMIC DNA]</scope>
    <source>
        <strain>O157:H7 / EDL933 / ATCC 700927 / EHEC</strain>
    </source>
</reference>
<reference key="2">
    <citation type="journal article" date="2001" name="DNA Res.">
        <title>Complete genome sequence of enterohemorrhagic Escherichia coli O157:H7 and genomic comparison with a laboratory strain K-12.</title>
        <authorList>
            <person name="Hayashi T."/>
            <person name="Makino K."/>
            <person name="Ohnishi M."/>
            <person name="Kurokawa K."/>
            <person name="Ishii K."/>
            <person name="Yokoyama K."/>
            <person name="Han C.-G."/>
            <person name="Ohtsubo E."/>
            <person name="Nakayama K."/>
            <person name="Murata T."/>
            <person name="Tanaka M."/>
            <person name="Tobe T."/>
            <person name="Iida T."/>
            <person name="Takami H."/>
            <person name="Honda T."/>
            <person name="Sasakawa C."/>
            <person name="Ogasawara N."/>
            <person name="Yasunaga T."/>
            <person name="Kuhara S."/>
            <person name="Shiba T."/>
            <person name="Hattori M."/>
            <person name="Shinagawa H."/>
        </authorList>
    </citation>
    <scope>NUCLEOTIDE SEQUENCE [LARGE SCALE GENOMIC DNA]</scope>
    <source>
        <strain>O157:H7 / Sakai / RIMD 0509952 / EHEC</strain>
    </source>
</reference>
<feature type="chain" id="PRO_0000164440" description="5'-methylthioadenosine/S-adenosylhomocysteine nucleosidase">
    <location>
        <begin position="1"/>
        <end position="232"/>
    </location>
</feature>
<feature type="active site" description="Proton acceptor" evidence="1">
    <location>
        <position position="12"/>
    </location>
</feature>
<feature type="active site" description="Proton donor" evidence="1">
    <location>
        <position position="197"/>
    </location>
</feature>
<feature type="binding site" evidence="1">
    <location>
        <position position="78"/>
    </location>
    <ligand>
        <name>substrate</name>
    </ligand>
</feature>
<feature type="binding site" evidence="1">
    <location>
        <position position="152"/>
    </location>
    <ligand>
        <name>substrate</name>
    </ligand>
</feature>
<feature type="binding site" evidence="1">
    <location>
        <begin position="173"/>
        <end position="174"/>
    </location>
    <ligand>
        <name>substrate</name>
    </ligand>
</feature>
<feature type="strand" evidence="2">
    <location>
        <begin position="2"/>
        <end position="9"/>
    </location>
</feature>
<feature type="helix" evidence="2">
    <location>
        <begin position="10"/>
        <end position="18"/>
    </location>
</feature>
<feature type="strand" evidence="2">
    <location>
        <begin position="21"/>
        <end position="28"/>
    </location>
</feature>
<feature type="strand" evidence="2">
    <location>
        <begin position="31"/>
        <end position="38"/>
    </location>
</feature>
<feature type="strand" evidence="2">
    <location>
        <begin position="41"/>
        <end position="47"/>
    </location>
</feature>
<feature type="helix" evidence="2">
    <location>
        <begin position="52"/>
        <end position="66"/>
    </location>
</feature>
<feature type="strand" evidence="2">
    <location>
        <begin position="69"/>
        <end position="79"/>
    </location>
</feature>
<feature type="strand" evidence="2">
    <location>
        <begin position="89"/>
        <end position="99"/>
    </location>
</feature>
<feature type="helix" evidence="2">
    <location>
        <begin position="103"/>
        <end position="105"/>
    </location>
</feature>
<feature type="strand" evidence="2">
    <location>
        <begin position="117"/>
        <end position="120"/>
    </location>
</feature>
<feature type="helix" evidence="2">
    <location>
        <begin position="123"/>
        <end position="136"/>
    </location>
</feature>
<feature type="strand" evidence="2">
    <location>
        <begin position="140"/>
        <end position="147"/>
    </location>
</feature>
<feature type="helix" evidence="2">
    <location>
        <begin position="155"/>
        <end position="164"/>
    </location>
</feature>
<feature type="strand" evidence="2">
    <location>
        <begin position="168"/>
        <end position="174"/>
    </location>
</feature>
<feature type="helix" evidence="2">
    <location>
        <begin position="175"/>
        <end position="184"/>
    </location>
</feature>
<feature type="strand" evidence="2">
    <location>
        <begin position="189"/>
        <end position="197"/>
    </location>
</feature>
<feature type="helix" evidence="2">
    <location>
        <begin position="203"/>
        <end position="231"/>
    </location>
</feature>
<organism>
    <name type="scientific">Escherichia coli O157:H7</name>
    <dbReference type="NCBI Taxonomy" id="83334"/>
    <lineage>
        <taxon>Bacteria</taxon>
        <taxon>Pseudomonadati</taxon>
        <taxon>Pseudomonadota</taxon>
        <taxon>Gammaproteobacteria</taxon>
        <taxon>Enterobacterales</taxon>
        <taxon>Enterobacteriaceae</taxon>
        <taxon>Escherichia</taxon>
    </lineage>
</organism>
<sequence>MKIGIIGAMEEEVTLLRDKIENRQTISLGGCEIYTGQLNGTEVALLKSGIGKVAAALGATLLLEHCKPDVIINTGSAGGLAPTLKVGDIVVSDEARYHDADVTAFGYEYGQLPGCPAGFKADDKLIAAAEACIAELNLNAVRGLIVSGDAFINGSVGLAKIRHNFPQAIAVEMEATAIAHVCHNFNVPFVVVRAISDVADQQSHLSFDEFLAVAAKQSSLMVESLVQKLAHG</sequence>
<protein>
    <recommendedName>
        <fullName evidence="1">5'-methylthioadenosine/S-adenosylhomocysteine nucleosidase</fullName>
        <shortName evidence="1">MTA/SAH nucleosidase</shortName>
        <shortName evidence="1">MTAN</shortName>
        <ecNumber evidence="1">3.2.2.9</ecNumber>
    </recommendedName>
    <alternativeName>
        <fullName evidence="1">5'-deoxyadenosine nucleosidase</fullName>
        <shortName evidence="1">DOA nucleosidase</shortName>
        <shortName evidence="1">dAdo nucleosidase</shortName>
    </alternativeName>
    <alternativeName>
        <fullName evidence="1">5'-methylthioadenosine nucleosidase</fullName>
        <shortName evidence="1">MTA nucleosidase</shortName>
    </alternativeName>
    <alternativeName>
        <fullName evidence="1">S-adenosylhomocysteine nucleosidase</fullName>
        <shortName evidence="1">AdoHcy nucleosidase</shortName>
        <shortName evidence="1">SAH nucleosidase</shortName>
        <shortName evidence="1">SRH nucleosidase</shortName>
    </alternativeName>
</protein>